<feature type="chain" id="PRO_1000087997" description="Polyribonucleotide nucleotidyltransferase">
    <location>
        <begin position="1"/>
        <end position="748"/>
    </location>
</feature>
<feature type="domain" description="KH" evidence="1">
    <location>
        <begin position="554"/>
        <end position="613"/>
    </location>
</feature>
<feature type="domain" description="S1 motif" evidence="1">
    <location>
        <begin position="623"/>
        <end position="691"/>
    </location>
</feature>
<feature type="region of interest" description="Disordered" evidence="2">
    <location>
        <begin position="695"/>
        <end position="733"/>
    </location>
</feature>
<feature type="compositionally biased region" description="Polar residues" evidence="2">
    <location>
        <begin position="699"/>
        <end position="712"/>
    </location>
</feature>
<feature type="compositionally biased region" description="Basic and acidic residues" evidence="2">
    <location>
        <begin position="713"/>
        <end position="722"/>
    </location>
</feature>
<feature type="binding site" evidence="1">
    <location>
        <position position="487"/>
    </location>
    <ligand>
        <name>Mg(2+)</name>
        <dbReference type="ChEBI" id="CHEBI:18420"/>
    </ligand>
</feature>
<feature type="binding site" evidence="1">
    <location>
        <position position="493"/>
    </location>
    <ligand>
        <name>Mg(2+)</name>
        <dbReference type="ChEBI" id="CHEBI:18420"/>
    </ligand>
</feature>
<name>PNP_RICRO</name>
<accession>B0BXR0</accession>
<protein>
    <recommendedName>
        <fullName evidence="1">Polyribonucleotide nucleotidyltransferase</fullName>
        <ecNumber evidence="1">2.7.7.8</ecNumber>
    </recommendedName>
    <alternativeName>
        <fullName evidence="1">Polynucleotide phosphorylase</fullName>
        <shortName evidence="1">PNPase</shortName>
    </alternativeName>
</protein>
<comment type="function">
    <text evidence="1">Involved in mRNA degradation. Catalyzes the phosphorolysis of single-stranded polyribonucleotides processively in the 3'- to 5'-direction.</text>
</comment>
<comment type="catalytic activity">
    <reaction evidence="1">
        <text>RNA(n+1) + phosphate = RNA(n) + a ribonucleoside 5'-diphosphate</text>
        <dbReference type="Rhea" id="RHEA:22096"/>
        <dbReference type="Rhea" id="RHEA-COMP:14527"/>
        <dbReference type="Rhea" id="RHEA-COMP:17342"/>
        <dbReference type="ChEBI" id="CHEBI:43474"/>
        <dbReference type="ChEBI" id="CHEBI:57930"/>
        <dbReference type="ChEBI" id="CHEBI:140395"/>
        <dbReference type="EC" id="2.7.7.8"/>
    </reaction>
</comment>
<comment type="cofactor">
    <cofactor evidence="1">
        <name>Mg(2+)</name>
        <dbReference type="ChEBI" id="CHEBI:18420"/>
    </cofactor>
</comment>
<comment type="subcellular location">
    <subcellularLocation>
        <location evidence="1">Cytoplasm</location>
    </subcellularLocation>
</comment>
<comment type="similarity">
    <text evidence="1">Belongs to the polyribonucleotide nucleotidyltransferase family.</text>
</comment>
<organism>
    <name type="scientific">Rickettsia rickettsii (strain Iowa)</name>
    <dbReference type="NCBI Taxonomy" id="452659"/>
    <lineage>
        <taxon>Bacteria</taxon>
        <taxon>Pseudomonadati</taxon>
        <taxon>Pseudomonadota</taxon>
        <taxon>Alphaproteobacteria</taxon>
        <taxon>Rickettsiales</taxon>
        <taxon>Rickettsiaceae</taxon>
        <taxon>Rickettsieae</taxon>
        <taxon>Rickettsia</taxon>
        <taxon>spotted fever group</taxon>
    </lineage>
</organism>
<evidence type="ECO:0000255" key="1">
    <source>
        <dbReference type="HAMAP-Rule" id="MF_01595"/>
    </source>
</evidence>
<evidence type="ECO:0000256" key="2">
    <source>
        <dbReference type="SAM" id="MobiDB-lite"/>
    </source>
</evidence>
<keyword id="KW-0963">Cytoplasm</keyword>
<keyword id="KW-0460">Magnesium</keyword>
<keyword id="KW-0479">Metal-binding</keyword>
<keyword id="KW-0548">Nucleotidyltransferase</keyword>
<keyword id="KW-0694">RNA-binding</keyword>
<keyword id="KW-0808">Transferase</keyword>
<proteinExistence type="inferred from homology"/>
<dbReference type="EC" id="2.7.7.8" evidence="1"/>
<dbReference type="EMBL" id="CP000766">
    <property type="protein sequence ID" value="ABY72636.1"/>
    <property type="molecule type" value="Genomic_DNA"/>
</dbReference>
<dbReference type="RefSeq" id="WP_012150853.1">
    <property type="nucleotide sequence ID" value="NC_010263.3"/>
</dbReference>
<dbReference type="SMR" id="B0BXR0"/>
<dbReference type="GeneID" id="79937400"/>
<dbReference type="KEGG" id="rrj:RrIowa_0793"/>
<dbReference type="eggNOG" id="COG1185">
    <property type="taxonomic scope" value="Bacteria"/>
</dbReference>
<dbReference type="HOGENOM" id="CLU_004217_2_2_5"/>
<dbReference type="Proteomes" id="UP000000796">
    <property type="component" value="Chromosome"/>
</dbReference>
<dbReference type="GO" id="GO:0005829">
    <property type="term" value="C:cytosol"/>
    <property type="evidence" value="ECO:0007669"/>
    <property type="project" value="TreeGrafter"/>
</dbReference>
<dbReference type="GO" id="GO:0000175">
    <property type="term" value="F:3'-5'-RNA exonuclease activity"/>
    <property type="evidence" value="ECO:0007669"/>
    <property type="project" value="TreeGrafter"/>
</dbReference>
<dbReference type="GO" id="GO:0000287">
    <property type="term" value="F:magnesium ion binding"/>
    <property type="evidence" value="ECO:0007669"/>
    <property type="project" value="UniProtKB-UniRule"/>
</dbReference>
<dbReference type="GO" id="GO:0004654">
    <property type="term" value="F:polyribonucleotide nucleotidyltransferase activity"/>
    <property type="evidence" value="ECO:0007669"/>
    <property type="project" value="UniProtKB-UniRule"/>
</dbReference>
<dbReference type="GO" id="GO:0003723">
    <property type="term" value="F:RNA binding"/>
    <property type="evidence" value="ECO:0007669"/>
    <property type="project" value="UniProtKB-UniRule"/>
</dbReference>
<dbReference type="GO" id="GO:0006402">
    <property type="term" value="P:mRNA catabolic process"/>
    <property type="evidence" value="ECO:0007669"/>
    <property type="project" value="UniProtKB-UniRule"/>
</dbReference>
<dbReference type="GO" id="GO:0006396">
    <property type="term" value="P:RNA processing"/>
    <property type="evidence" value="ECO:0007669"/>
    <property type="project" value="InterPro"/>
</dbReference>
<dbReference type="CDD" id="cd02393">
    <property type="entry name" value="KH-I_PNPase"/>
    <property type="match status" value="1"/>
</dbReference>
<dbReference type="CDD" id="cd11363">
    <property type="entry name" value="RNase_PH_PNPase_1"/>
    <property type="match status" value="1"/>
</dbReference>
<dbReference type="CDD" id="cd11364">
    <property type="entry name" value="RNase_PH_PNPase_2"/>
    <property type="match status" value="1"/>
</dbReference>
<dbReference type="FunFam" id="3.30.1370.10:FF:000001">
    <property type="entry name" value="Polyribonucleotide nucleotidyltransferase"/>
    <property type="match status" value="1"/>
</dbReference>
<dbReference type="FunFam" id="3.30.230.70:FF:000001">
    <property type="entry name" value="Polyribonucleotide nucleotidyltransferase"/>
    <property type="match status" value="1"/>
</dbReference>
<dbReference type="FunFam" id="3.30.230.70:FF:000002">
    <property type="entry name" value="Polyribonucleotide nucleotidyltransferase"/>
    <property type="match status" value="1"/>
</dbReference>
<dbReference type="FunFam" id="2.40.50.140:FF:000189">
    <property type="entry name" value="Polyribonucleotide nucleotidyltransferase, putative"/>
    <property type="match status" value="1"/>
</dbReference>
<dbReference type="Gene3D" id="3.30.230.70">
    <property type="entry name" value="GHMP Kinase, N-terminal domain"/>
    <property type="match status" value="2"/>
</dbReference>
<dbReference type="Gene3D" id="3.30.1370.10">
    <property type="entry name" value="K Homology domain, type 1"/>
    <property type="match status" value="1"/>
</dbReference>
<dbReference type="Gene3D" id="2.40.50.140">
    <property type="entry name" value="Nucleic acid-binding proteins"/>
    <property type="match status" value="1"/>
</dbReference>
<dbReference type="HAMAP" id="MF_01595">
    <property type="entry name" value="PNPase"/>
    <property type="match status" value="1"/>
</dbReference>
<dbReference type="InterPro" id="IPR001247">
    <property type="entry name" value="ExoRNase_PH_dom1"/>
</dbReference>
<dbReference type="InterPro" id="IPR015847">
    <property type="entry name" value="ExoRNase_PH_dom2"/>
</dbReference>
<dbReference type="InterPro" id="IPR036345">
    <property type="entry name" value="ExoRNase_PH_dom2_sf"/>
</dbReference>
<dbReference type="InterPro" id="IPR004087">
    <property type="entry name" value="KH_dom"/>
</dbReference>
<dbReference type="InterPro" id="IPR004088">
    <property type="entry name" value="KH_dom_type_1"/>
</dbReference>
<dbReference type="InterPro" id="IPR036612">
    <property type="entry name" value="KH_dom_type_1_sf"/>
</dbReference>
<dbReference type="InterPro" id="IPR012340">
    <property type="entry name" value="NA-bd_OB-fold"/>
</dbReference>
<dbReference type="InterPro" id="IPR012162">
    <property type="entry name" value="PNPase"/>
</dbReference>
<dbReference type="InterPro" id="IPR027408">
    <property type="entry name" value="PNPase/RNase_PH_dom_sf"/>
</dbReference>
<dbReference type="InterPro" id="IPR015848">
    <property type="entry name" value="PNPase_PH_RNA-bd_bac/org-type"/>
</dbReference>
<dbReference type="InterPro" id="IPR036456">
    <property type="entry name" value="PNPase_PH_RNA-bd_sf"/>
</dbReference>
<dbReference type="InterPro" id="IPR020568">
    <property type="entry name" value="Ribosomal_Su5_D2-typ_SF"/>
</dbReference>
<dbReference type="InterPro" id="IPR003029">
    <property type="entry name" value="S1_domain"/>
</dbReference>
<dbReference type="NCBIfam" id="TIGR03591">
    <property type="entry name" value="polynuc_phos"/>
    <property type="match status" value="1"/>
</dbReference>
<dbReference type="NCBIfam" id="NF008805">
    <property type="entry name" value="PRK11824.1"/>
    <property type="match status" value="1"/>
</dbReference>
<dbReference type="PANTHER" id="PTHR11252">
    <property type="entry name" value="POLYRIBONUCLEOTIDE NUCLEOTIDYLTRANSFERASE"/>
    <property type="match status" value="1"/>
</dbReference>
<dbReference type="PANTHER" id="PTHR11252:SF0">
    <property type="entry name" value="POLYRIBONUCLEOTIDE NUCLEOTIDYLTRANSFERASE 1, MITOCHONDRIAL"/>
    <property type="match status" value="1"/>
</dbReference>
<dbReference type="Pfam" id="PF00013">
    <property type="entry name" value="KH_1"/>
    <property type="match status" value="1"/>
</dbReference>
<dbReference type="Pfam" id="PF03726">
    <property type="entry name" value="PNPase"/>
    <property type="match status" value="1"/>
</dbReference>
<dbReference type="Pfam" id="PF01138">
    <property type="entry name" value="RNase_PH"/>
    <property type="match status" value="2"/>
</dbReference>
<dbReference type="Pfam" id="PF03725">
    <property type="entry name" value="RNase_PH_C"/>
    <property type="match status" value="1"/>
</dbReference>
<dbReference type="Pfam" id="PF00575">
    <property type="entry name" value="S1"/>
    <property type="match status" value="1"/>
</dbReference>
<dbReference type="PIRSF" id="PIRSF005499">
    <property type="entry name" value="PNPase"/>
    <property type="match status" value="1"/>
</dbReference>
<dbReference type="SMART" id="SM00322">
    <property type="entry name" value="KH"/>
    <property type="match status" value="1"/>
</dbReference>
<dbReference type="SMART" id="SM00316">
    <property type="entry name" value="S1"/>
    <property type="match status" value="1"/>
</dbReference>
<dbReference type="SUPFAM" id="SSF54791">
    <property type="entry name" value="Eukaryotic type KH-domain (KH-domain type I)"/>
    <property type="match status" value="1"/>
</dbReference>
<dbReference type="SUPFAM" id="SSF50249">
    <property type="entry name" value="Nucleic acid-binding proteins"/>
    <property type="match status" value="1"/>
</dbReference>
<dbReference type="SUPFAM" id="SSF46915">
    <property type="entry name" value="Polynucleotide phosphorylase/guanosine pentaphosphate synthase (PNPase/GPSI), domain 3"/>
    <property type="match status" value="1"/>
</dbReference>
<dbReference type="SUPFAM" id="SSF55666">
    <property type="entry name" value="Ribonuclease PH domain 2-like"/>
    <property type="match status" value="2"/>
</dbReference>
<dbReference type="SUPFAM" id="SSF54211">
    <property type="entry name" value="Ribosomal protein S5 domain 2-like"/>
    <property type="match status" value="2"/>
</dbReference>
<dbReference type="PROSITE" id="PS50084">
    <property type="entry name" value="KH_TYPE_1"/>
    <property type="match status" value="1"/>
</dbReference>
<dbReference type="PROSITE" id="PS50126">
    <property type="entry name" value="S1"/>
    <property type="match status" value="1"/>
</dbReference>
<gene>
    <name evidence="1" type="primary">pnp</name>
    <name type="ordered locus">RrIowa_0793</name>
</gene>
<reference key="1">
    <citation type="journal article" date="2008" name="Infect. Immun.">
        <title>Genomic comparison of virulent Rickettsia rickettsii Sheila Smith and avirulent Rickettsia rickettsii Iowa.</title>
        <authorList>
            <person name="Ellison D.W."/>
            <person name="Clark T.R."/>
            <person name="Sturdevant D.E."/>
            <person name="Virtaneva K."/>
            <person name="Porcella S.F."/>
            <person name="Hackstadt T."/>
        </authorList>
    </citation>
    <scope>NUCLEOTIDE SEQUENCE [LARGE SCALE GENOMIC DNA]</scope>
    <source>
        <strain>Iowa</strain>
    </source>
</reference>
<sequence>MFNEITKSVTWNGQVLELSTGKIARQADGAVTVKMGNSVLLCTAVVANKAKEGIGFLPLTINYREMAYAAGKIPGGFFKHEGKPSDREVLVSRLIDRPIRPLFHPAFVNETHVTCSVLSYDPETPVDILAIIGASAALSLSPAPYLEIVAASKVGLINGEFVLNPTLALLKTSQLDLVVAGTSDSVMMVESEAHLLSEEQMLEAVKFGFESFQPVIKIIKELAEEAKKPKLEMQALYPASLKKEIEKLFVKEIEQAFAMKSKQERSTNLDLITEKVFTHFVSDIENKKYSHYQIESALKAIESGILRNEILEKNRRIDGRSTTDIRQIACEIGLLPSAHGSALFTRGETQSLVSTTFGTSLDEQIVDSLEGEYKERFMLNYIFPPYSVNEAMPMKAPSRREVGHGKLAWRAINPILPNKVQFPYSIRVVAETTESNGSSSMATVCGSSLALMYAGVPIKAPVAGIAMGLVKEGKNFAVLSDILGDEDYFGDMDFKVAGTGEGITALQMDIKISGVDFKIMKVALEQARLGRLHILEQMNKVISKPNNELSKNAPSTTTIKIDKDKIRDIIGPGGKVIKEICETSGAKIDISDDGTVSVYASDRDKLKVALDKIKAIVVEPEIGEIFNGTVVKVLDSGAFINYVGNKDGFVHISEVSGERIETVSSVLKQGDIVKVKLIGFDNKGKAKLTIKNADKDKFSNNTKPKTSVNNTKDNSEPEQRHDSSKKRAWNEDNNAEIAEVITERKYFN</sequence>